<keyword id="KW-0119">Carbohydrate metabolism</keyword>
<keyword id="KW-0165">Cleavage on pair of basic residues</keyword>
<keyword id="KW-0903">Direct protein sequencing</keyword>
<keyword id="KW-1015">Disulfide bond</keyword>
<keyword id="KW-0313">Glucose metabolism</keyword>
<keyword id="KW-0372">Hormone</keyword>
<keyword id="KW-1185">Reference proteome</keyword>
<keyword id="KW-0964">Secreted</keyword>
<keyword id="KW-0732">Signal</keyword>
<reference key="1">
    <citation type="journal article" date="1985" name="J. Biol. Chem.">
        <title>Sequence and evolution of guinea pig preproinsulin DNA.</title>
        <authorList>
            <person name="Watt V.M."/>
        </authorList>
    </citation>
    <scope>NUCLEOTIDE SEQUENCE [MRNA]</scope>
</reference>
<reference key="2">
    <citation type="journal article" date="1984" name="Proc. Natl. Acad. Sci. U.S.A.">
        <title>Guinea pig preproinsulin gene: an evolutionary compromise?</title>
        <authorList>
            <person name="Chan S.J."/>
            <person name="Episkopou V."/>
            <person name="Zeitlin S."/>
            <person name="Karathanasis S.K."/>
            <person name="Mackrell A."/>
            <person name="Steiner D.F."/>
            <person name="Efstratiadis A."/>
        </authorList>
    </citation>
    <scope>NUCLEOTIDE SEQUENCE [GENOMIC DNA]</scope>
</reference>
<reference key="3">
    <citation type="journal article" date="1966" name="Am. J. Med.">
        <title>Species variation in the amino acid sequence of insulin.</title>
        <authorList>
            <person name="Smith L.F."/>
        </authorList>
    </citation>
    <scope>PROTEIN SEQUENCE OF 25-54 AND 90-110</scope>
</reference>
<reference key="4">
    <citation type="journal article" date="1972" name="Diabetes 21 Suppl.">
        <title>Amino acid sequences of insulins.</title>
        <authorList>
            <person name="Smith L.F."/>
        </authorList>
    </citation>
    <scope>SEQUENCE REVISION</scope>
</reference>
<reference key="5">
    <citation type="journal article" date="1975" name="J. Biol. Chem.">
        <title>Guinea pig proinsulin. Primary structure of the C-peptide isolated from pancreas.</title>
        <authorList>
            <person name="Massey D.E."/>
            <person name="Smyth D.G."/>
        </authorList>
    </citation>
    <scope>PROTEIN SEQUENCE OF 57-87</scope>
</reference>
<evidence type="ECO:0000250" key="1">
    <source>
        <dbReference type="UniProtKB" id="P01308"/>
    </source>
</evidence>
<evidence type="ECO:0000269" key="2">
    <source>
    </source>
</evidence>
<evidence type="ECO:0000269" key="3">
    <source>
    </source>
</evidence>
<evidence type="ECO:0000305" key="4"/>
<name>INS_CAVPO</name>
<comment type="function">
    <text>Insulin decreases blood glucose concentration. It increases cell permeability to monosaccharides, amino acids and fatty acids. It accelerates glycolysis, the pentose phosphate cycle, and glycogen synthesis in liver.</text>
</comment>
<comment type="subunit">
    <text evidence="1">Heterodimer of a B chain and an A chain linked by two disulfide bonds.</text>
</comment>
<comment type="subcellular location">
    <subcellularLocation>
        <location>Secreted</location>
    </subcellularLocation>
</comment>
<comment type="similarity">
    <text evidence="4">Belongs to the insulin family.</text>
</comment>
<organism>
    <name type="scientific">Cavia porcellus</name>
    <name type="common">Guinea pig</name>
    <dbReference type="NCBI Taxonomy" id="10141"/>
    <lineage>
        <taxon>Eukaryota</taxon>
        <taxon>Metazoa</taxon>
        <taxon>Chordata</taxon>
        <taxon>Craniata</taxon>
        <taxon>Vertebrata</taxon>
        <taxon>Euteleostomi</taxon>
        <taxon>Mammalia</taxon>
        <taxon>Eutheria</taxon>
        <taxon>Euarchontoglires</taxon>
        <taxon>Glires</taxon>
        <taxon>Rodentia</taxon>
        <taxon>Hystricomorpha</taxon>
        <taxon>Caviidae</taxon>
        <taxon>Cavia</taxon>
    </lineage>
</organism>
<protein>
    <recommendedName>
        <fullName>Insulin</fullName>
    </recommendedName>
    <component>
        <recommendedName>
            <fullName>Insulin B chain</fullName>
        </recommendedName>
    </component>
    <component>
        <recommendedName>
            <fullName>Insulin A chain</fullName>
        </recommendedName>
    </component>
</protein>
<dbReference type="EMBL" id="K02233">
    <property type="protein sequence ID" value="AAA37041.1"/>
    <property type="molecule type" value="Genomic_DNA"/>
</dbReference>
<dbReference type="EMBL" id="M11713">
    <property type="protein sequence ID" value="AAA37042.1"/>
    <property type="molecule type" value="mRNA"/>
</dbReference>
<dbReference type="PIR" id="A25370">
    <property type="entry name" value="IPGP"/>
</dbReference>
<dbReference type="RefSeq" id="NP_001166362.1">
    <property type="nucleotide sequence ID" value="NM_001172891.1"/>
</dbReference>
<dbReference type="RefSeq" id="XP_013006103.1">
    <property type="nucleotide sequence ID" value="XM_013150649.1"/>
</dbReference>
<dbReference type="SMR" id="P01329"/>
<dbReference type="FunCoup" id="P01329">
    <property type="interactions" value="1257"/>
</dbReference>
<dbReference type="STRING" id="10141.ENSCPOP00000026989"/>
<dbReference type="Ensembl" id="ENSCPOT00000044344.1">
    <property type="protein sequence ID" value="ENSCPOP00000026989.1"/>
    <property type="gene ID" value="ENSCPOG00000031250.1"/>
</dbReference>
<dbReference type="GeneID" id="100379579"/>
<dbReference type="KEGG" id="cpoc:100379579"/>
<dbReference type="CTD" id="3630"/>
<dbReference type="VEuPathDB" id="HostDB:ENSCPOG00000031250"/>
<dbReference type="eggNOG" id="ENOG502S5P5">
    <property type="taxonomic scope" value="Eukaryota"/>
</dbReference>
<dbReference type="GeneTree" id="ENSGT00390000015440"/>
<dbReference type="HOGENOM" id="CLU_140421_1_0_1"/>
<dbReference type="InParanoid" id="P01329"/>
<dbReference type="OMA" id="LANQHLC"/>
<dbReference type="OrthoDB" id="10019596at2759"/>
<dbReference type="TreeFam" id="TF332820"/>
<dbReference type="Proteomes" id="UP000005447">
    <property type="component" value="Unassembled WGS sequence"/>
</dbReference>
<dbReference type="Bgee" id="ENSCPOG00000031250">
    <property type="expression patterns" value="Expressed in liver"/>
</dbReference>
<dbReference type="GO" id="GO:0005615">
    <property type="term" value="C:extracellular space"/>
    <property type="evidence" value="ECO:0007669"/>
    <property type="project" value="Ensembl"/>
</dbReference>
<dbReference type="GO" id="GO:0005179">
    <property type="term" value="F:hormone activity"/>
    <property type="evidence" value="ECO:0007669"/>
    <property type="project" value="UniProtKB-KW"/>
</dbReference>
<dbReference type="GO" id="GO:0042802">
    <property type="term" value="F:identical protein binding"/>
    <property type="evidence" value="ECO:0007669"/>
    <property type="project" value="Ensembl"/>
</dbReference>
<dbReference type="GO" id="GO:0005158">
    <property type="term" value="F:insulin receptor binding"/>
    <property type="evidence" value="ECO:0007669"/>
    <property type="project" value="Ensembl"/>
</dbReference>
<dbReference type="GO" id="GO:0005159">
    <property type="term" value="F:insulin-like growth factor receptor binding"/>
    <property type="evidence" value="ECO:0007669"/>
    <property type="project" value="Ensembl"/>
</dbReference>
<dbReference type="GO" id="GO:0002020">
    <property type="term" value="F:protease binding"/>
    <property type="evidence" value="ECO:0007669"/>
    <property type="project" value="Ensembl"/>
</dbReference>
<dbReference type="GO" id="GO:0006953">
    <property type="term" value="P:acute-phase response"/>
    <property type="evidence" value="ECO:0007669"/>
    <property type="project" value="Ensembl"/>
</dbReference>
<dbReference type="GO" id="GO:0046631">
    <property type="term" value="P:alpha-beta T cell activation"/>
    <property type="evidence" value="ECO:0007669"/>
    <property type="project" value="Ensembl"/>
</dbReference>
<dbReference type="GO" id="GO:0055089">
    <property type="term" value="P:fatty acid homeostasis"/>
    <property type="evidence" value="ECO:0007669"/>
    <property type="project" value="Ensembl"/>
</dbReference>
<dbReference type="GO" id="GO:0007186">
    <property type="term" value="P:G protein-coupled receptor signaling pathway"/>
    <property type="evidence" value="ECO:0007669"/>
    <property type="project" value="Ensembl"/>
</dbReference>
<dbReference type="GO" id="GO:0042593">
    <property type="term" value="P:glucose homeostasis"/>
    <property type="evidence" value="ECO:0007669"/>
    <property type="project" value="Ensembl"/>
</dbReference>
<dbReference type="GO" id="GO:0006006">
    <property type="term" value="P:glucose metabolic process"/>
    <property type="evidence" value="ECO:0007669"/>
    <property type="project" value="UniProtKB-KW"/>
</dbReference>
<dbReference type="GO" id="GO:0008286">
    <property type="term" value="P:insulin receptor signaling pathway"/>
    <property type="evidence" value="ECO:0007669"/>
    <property type="project" value="Ensembl"/>
</dbReference>
<dbReference type="GO" id="GO:0002674">
    <property type="term" value="P:negative regulation of acute inflammatory response"/>
    <property type="evidence" value="ECO:0007669"/>
    <property type="project" value="Ensembl"/>
</dbReference>
<dbReference type="GO" id="GO:0045922">
    <property type="term" value="P:negative regulation of fatty acid metabolic process"/>
    <property type="evidence" value="ECO:0007669"/>
    <property type="project" value="Ensembl"/>
</dbReference>
<dbReference type="GO" id="GO:2000252">
    <property type="term" value="P:negative regulation of feeding behavior"/>
    <property type="evidence" value="ECO:0007669"/>
    <property type="project" value="Ensembl"/>
</dbReference>
<dbReference type="GO" id="GO:0010629">
    <property type="term" value="P:negative regulation of gene expression"/>
    <property type="evidence" value="ECO:0007669"/>
    <property type="project" value="Ensembl"/>
</dbReference>
<dbReference type="GO" id="GO:0045818">
    <property type="term" value="P:negative regulation of glycogen catabolic process"/>
    <property type="evidence" value="ECO:0007669"/>
    <property type="project" value="Ensembl"/>
</dbReference>
<dbReference type="GO" id="GO:0050995">
    <property type="term" value="P:negative regulation of lipid catabolic process"/>
    <property type="evidence" value="ECO:0007669"/>
    <property type="project" value="Ensembl"/>
</dbReference>
<dbReference type="GO" id="GO:0042177">
    <property type="term" value="P:negative regulation of protein catabolic process"/>
    <property type="evidence" value="ECO:0007669"/>
    <property type="project" value="Ensembl"/>
</dbReference>
<dbReference type="GO" id="GO:0050709">
    <property type="term" value="P:negative regulation of protein secretion"/>
    <property type="evidence" value="ECO:0007669"/>
    <property type="project" value="Ensembl"/>
</dbReference>
<dbReference type="GO" id="GO:1903427">
    <property type="term" value="P:negative regulation of reactive oxygen species biosynthetic process"/>
    <property type="evidence" value="ECO:0007669"/>
    <property type="project" value="Ensembl"/>
</dbReference>
<dbReference type="GO" id="GO:0060266">
    <property type="term" value="P:negative regulation of respiratory burst involved in inflammatory response"/>
    <property type="evidence" value="ECO:0007669"/>
    <property type="project" value="Ensembl"/>
</dbReference>
<dbReference type="GO" id="GO:1990535">
    <property type="term" value="P:neuron projection maintenance"/>
    <property type="evidence" value="ECO:0007669"/>
    <property type="project" value="Ensembl"/>
</dbReference>
<dbReference type="GO" id="GO:0038060">
    <property type="term" value="P:nitric oxide-cGMP-mediated signaling"/>
    <property type="evidence" value="ECO:0007669"/>
    <property type="project" value="Ensembl"/>
</dbReference>
<dbReference type="GO" id="GO:0043123">
    <property type="term" value="P:positive regulation of canonical NF-kappaB signal transduction"/>
    <property type="evidence" value="ECO:0007669"/>
    <property type="project" value="Ensembl"/>
</dbReference>
<dbReference type="GO" id="GO:0008284">
    <property type="term" value="P:positive regulation of cell population proliferation"/>
    <property type="evidence" value="ECO:0007669"/>
    <property type="project" value="Ensembl"/>
</dbReference>
<dbReference type="GO" id="GO:0001819">
    <property type="term" value="P:positive regulation of cytokine production"/>
    <property type="evidence" value="ECO:0007669"/>
    <property type="project" value="Ensembl"/>
</dbReference>
<dbReference type="GO" id="GO:0046326">
    <property type="term" value="P:positive regulation of D-glucose import"/>
    <property type="evidence" value="ECO:0007669"/>
    <property type="project" value="Ensembl"/>
</dbReference>
<dbReference type="GO" id="GO:1902952">
    <property type="term" value="P:positive regulation of dendritic spine maintenance"/>
    <property type="evidence" value="ECO:0007669"/>
    <property type="project" value="Ensembl"/>
</dbReference>
<dbReference type="GO" id="GO:0045725">
    <property type="term" value="P:positive regulation of glycogen biosynthetic process"/>
    <property type="evidence" value="ECO:0007669"/>
    <property type="project" value="Ensembl"/>
</dbReference>
<dbReference type="GO" id="GO:0045821">
    <property type="term" value="P:positive regulation of glycolytic process"/>
    <property type="evidence" value="ECO:0007669"/>
    <property type="project" value="Ensembl"/>
</dbReference>
<dbReference type="GO" id="GO:0046628">
    <property type="term" value="P:positive regulation of insulin receptor signaling pathway"/>
    <property type="evidence" value="ECO:0007669"/>
    <property type="project" value="Ensembl"/>
</dbReference>
<dbReference type="GO" id="GO:0043410">
    <property type="term" value="P:positive regulation of MAPK cascade"/>
    <property type="evidence" value="ECO:0007669"/>
    <property type="project" value="Ensembl"/>
</dbReference>
<dbReference type="GO" id="GO:0045840">
    <property type="term" value="P:positive regulation of mitotic nuclear division"/>
    <property type="evidence" value="ECO:0007669"/>
    <property type="project" value="Ensembl"/>
</dbReference>
<dbReference type="GO" id="GO:0010750">
    <property type="term" value="P:positive regulation of nitric oxide mediated signal transduction"/>
    <property type="evidence" value="ECO:0007669"/>
    <property type="project" value="Ensembl"/>
</dbReference>
<dbReference type="GO" id="GO:0051897">
    <property type="term" value="P:positive regulation of phosphatidylinositol 3-kinase/protein kinase B signal transduction"/>
    <property type="evidence" value="ECO:0007669"/>
    <property type="project" value="Ensembl"/>
</dbReference>
<dbReference type="GO" id="GO:1900182">
    <property type="term" value="P:positive regulation of protein localization to nucleus"/>
    <property type="evidence" value="ECO:0007669"/>
    <property type="project" value="Ensembl"/>
</dbReference>
<dbReference type="GO" id="GO:0050714">
    <property type="term" value="P:positive regulation of protein secretion"/>
    <property type="evidence" value="ECO:0007669"/>
    <property type="project" value="TreeGrafter"/>
</dbReference>
<dbReference type="GO" id="GO:0060267">
    <property type="term" value="P:positive regulation of respiratory burst"/>
    <property type="evidence" value="ECO:0007669"/>
    <property type="project" value="Ensembl"/>
</dbReference>
<dbReference type="GO" id="GO:1903076">
    <property type="term" value="P:regulation of protein localization to plasma membrane"/>
    <property type="evidence" value="ECO:0007669"/>
    <property type="project" value="Ensembl"/>
</dbReference>
<dbReference type="GO" id="GO:0042311">
    <property type="term" value="P:vasodilation"/>
    <property type="evidence" value="ECO:0007669"/>
    <property type="project" value="Ensembl"/>
</dbReference>
<dbReference type="GO" id="GO:0042060">
    <property type="term" value="P:wound healing"/>
    <property type="evidence" value="ECO:0007669"/>
    <property type="project" value="Ensembl"/>
</dbReference>
<dbReference type="CDD" id="cd04367">
    <property type="entry name" value="IlGF_insulin_like"/>
    <property type="match status" value="1"/>
</dbReference>
<dbReference type="FunFam" id="1.10.100.10:FF:000003">
    <property type="entry name" value="Insulin"/>
    <property type="match status" value="1"/>
</dbReference>
<dbReference type="Gene3D" id="1.10.100.10">
    <property type="entry name" value="Insulin-like"/>
    <property type="match status" value="1"/>
</dbReference>
<dbReference type="InterPro" id="IPR004825">
    <property type="entry name" value="Insulin"/>
</dbReference>
<dbReference type="InterPro" id="IPR016179">
    <property type="entry name" value="Insulin-like"/>
</dbReference>
<dbReference type="InterPro" id="IPR036438">
    <property type="entry name" value="Insulin-like_sf"/>
</dbReference>
<dbReference type="InterPro" id="IPR022353">
    <property type="entry name" value="Insulin_CS"/>
</dbReference>
<dbReference type="InterPro" id="IPR022352">
    <property type="entry name" value="Insulin_family"/>
</dbReference>
<dbReference type="PANTHER" id="PTHR11454:SF9">
    <property type="entry name" value="INSULIN"/>
    <property type="match status" value="1"/>
</dbReference>
<dbReference type="PANTHER" id="PTHR11454">
    <property type="entry name" value="INSULIN/INSULIN GROWTH FACTOR"/>
    <property type="match status" value="1"/>
</dbReference>
<dbReference type="Pfam" id="PF00049">
    <property type="entry name" value="Insulin"/>
    <property type="match status" value="1"/>
</dbReference>
<dbReference type="PRINTS" id="PR00277">
    <property type="entry name" value="INSULIN"/>
</dbReference>
<dbReference type="PRINTS" id="PR00276">
    <property type="entry name" value="INSULINFAMLY"/>
</dbReference>
<dbReference type="SMART" id="SM00078">
    <property type="entry name" value="IlGF"/>
    <property type="match status" value="1"/>
</dbReference>
<dbReference type="SUPFAM" id="SSF56994">
    <property type="entry name" value="Insulin-like"/>
    <property type="match status" value="1"/>
</dbReference>
<dbReference type="PROSITE" id="PS00262">
    <property type="entry name" value="INSULIN"/>
    <property type="match status" value="1"/>
</dbReference>
<feature type="signal peptide" evidence="2">
    <location>
        <begin position="1"/>
        <end position="24"/>
    </location>
</feature>
<feature type="peptide" id="PRO_0000015782" description="Insulin B chain" evidence="3">
    <location>
        <begin position="25"/>
        <end position="54"/>
    </location>
</feature>
<feature type="propeptide" id="PRO_0000015783" description="C peptide">
    <location>
        <begin position="57"/>
        <end position="87"/>
    </location>
</feature>
<feature type="peptide" id="PRO_0000015784" description="Insulin A chain" evidence="3">
    <location>
        <begin position="90"/>
        <end position="110"/>
    </location>
</feature>
<feature type="disulfide bond" description="Interchain (between B and A chains)" evidence="1">
    <location>
        <begin position="31"/>
        <end position="96"/>
    </location>
</feature>
<feature type="disulfide bond" description="Interchain (between B and A chains)" evidence="1">
    <location>
        <begin position="43"/>
        <end position="109"/>
    </location>
</feature>
<feature type="disulfide bond" evidence="1">
    <location>
        <begin position="95"/>
        <end position="100"/>
    </location>
</feature>
<feature type="sequence conflict" description="In Ref. 2; AAA37041." evidence="4" ref="2">
    <original>G</original>
    <variation>N</variation>
    <location>
        <position position="22"/>
    </location>
</feature>
<feature type="sequence conflict" description="In Ref. 5; AA sequence." evidence="4" ref="5">
    <original>ALEM</original>
    <variation>QG</variation>
    <location>
        <begin position="81"/>
        <end position="84"/>
    </location>
</feature>
<sequence>MALWMHLLTVLALLALWGPNTGQAFVSRHLCGSNLVETLYSVCQDDGFFYIPKDRRELEDPQVEQTELGMGLGAGGLQPLALEMALQKRGIVDQCCTGTCTRHQLQSYCN</sequence>
<gene>
    <name type="primary">INS</name>
</gene>
<proteinExistence type="evidence at protein level"/>
<accession>P01329</accession>